<proteinExistence type="evidence at protein level"/>
<name>TAOK3_HUMAN</name>
<feature type="chain" id="PRO_0000086737" description="Serine/threonine-protein kinase TAO3">
    <location>
        <begin position="1"/>
        <end position="898"/>
    </location>
</feature>
<feature type="domain" description="Protein kinase" evidence="4">
    <location>
        <begin position="24"/>
        <end position="277"/>
    </location>
</feature>
<feature type="region of interest" description="Disordered" evidence="6">
    <location>
        <begin position="316"/>
        <end position="362"/>
    </location>
</feature>
<feature type="region of interest" description="Disordered" evidence="6">
    <location>
        <begin position="405"/>
        <end position="425"/>
    </location>
</feature>
<feature type="region of interest" description="Disordered" evidence="6">
    <location>
        <begin position="565"/>
        <end position="596"/>
    </location>
</feature>
<feature type="coiled-coil region" evidence="3">
    <location>
        <begin position="452"/>
        <end position="502"/>
    </location>
</feature>
<feature type="coiled-coil region" evidence="3">
    <location>
        <begin position="548"/>
        <end position="649"/>
    </location>
</feature>
<feature type="coiled-coil region" evidence="3">
    <location>
        <begin position="754"/>
        <end position="879"/>
    </location>
</feature>
<feature type="compositionally biased region" description="Polar residues" evidence="6">
    <location>
        <begin position="334"/>
        <end position="351"/>
    </location>
</feature>
<feature type="compositionally biased region" description="Low complexity" evidence="6">
    <location>
        <begin position="352"/>
        <end position="362"/>
    </location>
</feature>
<feature type="compositionally biased region" description="Basic and acidic residues" evidence="6">
    <location>
        <begin position="405"/>
        <end position="416"/>
    </location>
</feature>
<feature type="active site" description="Proton acceptor" evidence="4 5">
    <location>
        <position position="147"/>
    </location>
</feature>
<feature type="binding site" evidence="4">
    <location>
        <begin position="30"/>
        <end position="38"/>
    </location>
    <ligand>
        <name>ATP</name>
        <dbReference type="ChEBI" id="CHEBI:30616"/>
    </ligand>
</feature>
<feature type="binding site" evidence="4">
    <location>
        <position position="53"/>
    </location>
    <ligand>
        <name>ATP</name>
        <dbReference type="ChEBI" id="CHEBI:30616"/>
    </ligand>
</feature>
<feature type="modified residue" description="Phosphoserine; by ATM" evidence="12 15 21 22 23 24 25 26">
    <location>
        <position position="324"/>
    </location>
</feature>
<feature type="modified residue" description="Phosphoserine" evidence="23 26">
    <location>
        <position position="331"/>
    </location>
</feature>
<feature type="modified residue" description="Phosphoserine" evidence="1">
    <location>
        <position position="343"/>
    </location>
</feature>
<feature type="modified residue" description="Phosphoserine" evidence="2">
    <location>
        <position position="346"/>
    </location>
</feature>
<feature type="modified residue" description="Phosphoserine" evidence="2">
    <location>
        <position position="349"/>
    </location>
</feature>
<feature type="modified residue" description="Phosphothreonine" evidence="2">
    <location>
        <position position="357"/>
    </location>
</feature>
<feature type="modified residue" description="Phosphoserine" evidence="2">
    <location>
        <position position="359"/>
    </location>
</feature>
<feature type="modified residue" description="Phosphoserine" evidence="21">
    <location>
        <position position="442"/>
    </location>
</feature>
<feature type="modified residue" description="N6-acetyllysine" evidence="2">
    <location>
        <position position="830"/>
    </location>
</feature>
<feature type="sequence variant" id="VAR_041205" description="In a lung adenocarcinoma sample; somatic mutation." evidence="11">
    <original>P</original>
    <variation>T</variation>
    <location>
        <position position="20"/>
    </location>
</feature>
<feature type="sequence variant" id="VAR_023691" description="In dbSNP:rs428073." evidence="10 11 19">
    <original>S</original>
    <variation>N</variation>
    <location>
        <position position="47"/>
    </location>
</feature>
<feature type="sequence variant" id="VAR_041206" description="In a lung small cell carcinoma sample; somatic mutation." evidence="11">
    <original>S</original>
    <variation>Y</variation>
    <location>
        <position position="392"/>
    </location>
</feature>
<feature type="sequence variant" id="VAR_041207" description="In dbSNP:rs55857273." evidence="11">
    <original>C</original>
    <variation>Y</variation>
    <location>
        <position position="727"/>
    </location>
</feature>
<feature type="mutagenesis site" description="Loss of serine/threonine-protein kinase activity." evidence="12">
    <original>D</original>
    <variation>A</variation>
    <location>
        <position position="165"/>
    </location>
</feature>
<feature type="mutagenesis site" description="No autophosphorylation, no kinase activity and reduced IL2 production by T cells; when associated with F-183." evidence="7 18">
    <original>T</original>
    <variation>A</variation>
    <location>
        <position position="181"/>
    </location>
</feature>
<feature type="mutagenesis site" description="No autophosphorylation, no kinase activity and reduced IL2 production by T cells; when associated with A-181." evidence="7 18">
    <original>Y</original>
    <variation>F</variation>
    <location>
        <position position="183"/>
    </location>
</feature>
<feature type="mutagenesis site" description="Enhances IL2 production by T cells and increases JNK phosphorylation." evidence="18">
    <original>Y</original>
    <variation>F</variation>
    <location>
        <position position="256"/>
    </location>
</feature>
<feature type="mutagenesis site" description="Enhances IL2 production by T cells and increases JNK phosphorylation." evidence="18">
    <original>Y</original>
    <variation>F</variation>
    <location>
        <position position="305"/>
    </location>
</feature>
<feature type="mutagenesis site" description="Inhibits activation of the p38/MAPK14 stress-activated MAPK cascade in response to DNA damage. Enhances IL2 production by T cells." evidence="12 18">
    <original>S</original>
    <variation>A</variation>
    <location>
        <position position="324"/>
    </location>
</feature>
<feature type="sequence conflict" description="In Ref. 3; AAG38501." evidence="20" ref="3">
    <original>A</original>
    <variation>T</variation>
    <location>
        <position position="136"/>
    </location>
</feature>
<feature type="sequence conflict" description="In Ref. 3; AAG38501." evidence="20" ref="3">
    <original>S</original>
    <variation>P</variation>
    <location>
        <position position="173"/>
    </location>
</feature>
<feature type="sequence conflict" description="In Ref. 1; AAF14559." evidence="20" ref="1">
    <original>STGSQSSSVNSMQEVMDESSSEL</original>
    <variation>TWNQPEQGNGQPGQQPFHSKHVR</variation>
    <location>
        <begin position="356"/>
        <end position="378"/>
    </location>
</feature>
<feature type="sequence conflict" description="In Ref. 3; AAG38501." evidence="20" ref="3">
    <original>Q</original>
    <variation>R</variation>
    <location>
        <position position="668"/>
    </location>
</feature>
<feature type="helix" evidence="27">
    <location>
        <begin position="9"/>
        <end position="12"/>
    </location>
</feature>
<feature type="helix" evidence="27">
    <location>
        <begin position="20"/>
        <end position="23"/>
    </location>
</feature>
<feature type="strand" evidence="27">
    <location>
        <begin position="24"/>
        <end position="33"/>
    </location>
</feature>
<feature type="strand" evidence="27">
    <location>
        <begin position="36"/>
        <end position="43"/>
    </location>
</feature>
<feature type="turn" evidence="27">
    <location>
        <begin position="44"/>
        <end position="46"/>
    </location>
</feature>
<feature type="strand" evidence="27">
    <location>
        <begin position="49"/>
        <end position="56"/>
    </location>
</feature>
<feature type="helix" evidence="27">
    <location>
        <begin position="59"/>
        <end position="61"/>
    </location>
</feature>
<feature type="helix" evidence="27">
    <location>
        <begin position="62"/>
        <end position="77"/>
    </location>
</feature>
<feature type="strand" evidence="27">
    <location>
        <begin position="87"/>
        <end position="93"/>
    </location>
</feature>
<feature type="strand" evidence="27">
    <location>
        <begin position="96"/>
        <end position="102"/>
    </location>
</feature>
<feature type="strand" evidence="27">
    <location>
        <begin position="105"/>
        <end position="107"/>
    </location>
</feature>
<feature type="helix" evidence="27">
    <location>
        <begin position="108"/>
        <end position="115"/>
    </location>
</feature>
<feature type="helix" evidence="27">
    <location>
        <begin position="121"/>
        <end position="140"/>
    </location>
</feature>
<feature type="helix" evidence="27">
    <location>
        <begin position="150"/>
        <end position="152"/>
    </location>
</feature>
<feature type="strand" evidence="27">
    <location>
        <begin position="153"/>
        <end position="155"/>
    </location>
</feature>
<feature type="strand" evidence="27">
    <location>
        <begin position="161"/>
        <end position="163"/>
    </location>
</feature>
<feature type="strand" evidence="27">
    <location>
        <begin position="170"/>
        <end position="175"/>
    </location>
</feature>
<feature type="helix" evidence="27">
    <location>
        <begin position="182"/>
        <end position="184"/>
    </location>
</feature>
<feature type="helix" evidence="27">
    <location>
        <begin position="187"/>
        <end position="192"/>
    </location>
</feature>
<feature type="turn" evidence="27">
    <location>
        <begin position="193"/>
        <end position="195"/>
    </location>
</feature>
<feature type="helix" evidence="27">
    <location>
        <begin position="201"/>
        <end position="216"/>
    </location>
</feature>
<feature type="turn" evidence="27">
    <location>
        <begin position="220"/>
        <end position="223"/>
    </location>
</feature>
<feature type="helix" evidence="27">
    <location>
        <begin position="226"/>
        <end position="235"/>
    </location>
</feature>
<feature type="helix" evidence="27">
    <location>
        <begin position="248"/>
        <end position="257"/>
    </location>
</feature>
<feature type="helix" evidence="27">
    <location>
        <begin position="262"/>
        <end position="264"/>
    </location>
</feature>
<feature type="helix" evidence="27">
    <location>
        <begin position="268"/>
        <end position="271"/>
    </location>
</feature>
<feature type="helix" evidence="27">
    <location>
        <begin position="275"/>
        <end position="278"/>
    </location>
</feature>
<feature type="helix" evidence="27">
    <location>
        <begin position="285"/>
        <end position="298"/>
    </location>
</feature>
<feature type="helix" evidence="27">
    <location>
        <begin position="302"/>
        <end position="308"/>
    </location>
</feature>
<feature type="helix" evidence="27">
    <location>
        <begin position="309"/>
        <end position="312"/>
    </location>
</feature>
<keyword id="KW-0002">3D-structure</keyword>
<keyword id="KW-0007">Acetylation</keyword>
<keyword id="KW-0067">ATP-binding</keyword>
<keyword id="KW-1003">Cell membrane</keyword>
<keyword id="KW-0175">Coiled coil</keyword>
<keyword id="KW-0963">Cytoplasm</keyword>
<keyword id="KW-0227">DNA damage</keyword>
<keyword id="KW-0234">DNA repair</keyword>
<keyword id="KW-0418">Kinase</keyword>
<keyword id="KW-0551">Lipid droplet</keyword>
<keyword id="KW-0472">Membrane</keyword>
<keyword id="KW-0547">Nucleotide-binding</keyword>
<keyword id="KW-0597">Phosphoprotein</keyword>
<keyword id="KW-1267">Proteomics identification</keyword>
<keyword id="KW-1185">Reference proteome</keyword>
<keyword id="KW-0723">Serine/threonine-protein kinase</keyword>
<keyword id="KW-0808">Transferase</keyword>
<dbReference type="EC" id="2.7.11.1"/>
<dbReference type="EMBL" id="AF179867">
    <property type="protein sequence ID" value="AAF14559.1"/>
    <property type="molecule type" value="mRNA"/>
</dbReference>
<dbReference type="EMBL" id="AF135158">
    <property type="protein sequence ID" value="AAG09131.1"/>
    <property type="molecule type" value="mRNA"/>
</dbReference>
<dbReference type="EMBL" id="AF263311">
    <property type="protein sequence ID" value="AAG38501.1"/>
    <property type="molecule type" value="mRNA"/>
</dbReference>
<dbReference type="EMBL" id="AF181985">
    <property type="protein sequence ID" value="AAF25817.1"/>
    <property type="molecule type" value="mRNA"/>
</dbReference>
<dbReference type="EMBL" id="BT007185">
    <property type="protein sequence ID" value="AAP35849.1"/>
    <property type="molecule type" value="mRNA"/>
</dbReference>
<dbReference type="EMBL" id="AC026366">
    <property type="status" value="NOT_ANNOTATED_CDS"/>
    <property type="molecule type" value="Genomic_DNA"/>
</dbReference>
<dbReference type="EMBL" id="BC002756">
    <property type="protein sequence ID" value="AAH02756.1"/>
    <property type="molecule type" value="mRNA"/>
</dbReference>
<dbReference type="EMBL" id="AL833731">
    <property type="protein sequence ID" value="CAH56239.1"/>
    <property type="molecule type" value="mRNA"/>
</dbReference>
<dbReference type="EMBL" id="AF328731">
    <property type="protein sequence ID" value="AAN09723.1"/>
    <property type="status" value="ALT_INIT"/>
    <property type="molecule type" value="mRNA"/>
</dbReference>
<dbReference type="CCDS" id="CCDS9188.1"/>
<dbReference type="RefSeq" id="NP_001333417.1">
    <property type="nucleotide sequence ID" value="NM_001346488.2"/>
</dbReference>
<dbReference type="RefSeq" id="NP_001333418.1">
    <property type="nucleotide sequence ID" value="NM_001346489.2"/>
</dbReference>
<dbReference type="RefSeq" id="NP_057365.3">
    <property type="nucleotide sequence ID" value="NM_016281.3"/>
</dbReference>
<dbReference type="PDB" id="6BDN">
    <property type="method" value="X-ray"/>
    <property type="resolution" value="1.50 A"/>
    <property type="chains" value="A=1-316"/>
</dbReference>
<dbReference type="PDBsum" id="6BDN"/>
<dbReference type="SMR" id="Q9H2K8"/>
<dbReference type="BioGRID" id="119490">
    <property type="interactions" value="50"/>
</dbReference>
<dbReference type="FunCoup" id="Q9H2K8">
    <property type="interactions" value="2466"/>
</dbReference>
<dbReference type="IntAct" id="Q9H2K8">
    <property type="interactions" value="25"/>
</dbReference>
<dbReference type="STRING" id="9606.ENSP00000376317"/>
<dbReference type="BindingDB" id="Q9H2K8"/>
<dbReference type="ChEMBL" id="CHEMBL5701"/>
<dbReference type="DrugBank" id="DB12010">
    <property type="generic name" value="Fostamatinib"/>
</dbReference>
<dbReference type="DrugCentral" id="Q9H2K8"/>
<dbReference type="GuidetoPHARMACOLOGY" id="2235"/>
<dbReference type="iPTMnet" id="Q9H2K8"/>
<dbReference type="MetOSite" id="Q9H2K8"/>
<dbReference type="PhosphoSitePlus" id="Q9H2K8"/>
<dbReference type="BioMuta" id="TAOK3"/>
<dbReference type="DMDM" id="78099183"/>
<dbReference type="CPTAC" id="CPTAC-2949"/>
<dbReference type="CPTAC" id="CPTAC-2950"/>
<dbReference type="jPOST" id="Q9H2K8"/>
<dbReference type="MassIVE" id="Q9H2K8"/>
<dbReference type="PaxDb" id="9606-ENSP00000376317"/>
<dbReference type="PeptideAtlas" id="Q9H2K8"/>
<dbReference type="ProteomicsDB" id="80560"/>
<dbReference type="Pumba" id="Q9H2K8"/>
<dbReference type="Antibodypedia" id="2111">
    <property type="antibodies" value="390 antibodies from 36 providers"/>
</dbReference>
<dbReference type="DNASU" id="51347"/>
<dbReference type="Ensembl" id="ENST00000392533.8">
    <property type="protein sequence ID" value="ENSP00000376317.3"/>
    <property type="gene ID" value="ENSG00000135090.14"/>
</dbReference>
<dbReference type="Ensembl" id="ENST00000419821.6">
    <property type="protein sequence ID" value="ENSP00000416374.2"/>
    <property type="gene ID" value="ENSG00000135090.14"/>
</dbReference>
<dbReference type="GeneID" id="51347"/>
<dbReference type="KEGG" id="hsa:51347"/>
<dbReference type="MANE-Select" id="ENST00000392533.8">
    <property type="protein sequence ID" value="ENSP00000376317.3"/>
    <property type="RefSeq nucleotide sequence ID" value="NM_016281.4"/>
    <property type="RefSeq protein sequence ID" value="NP_057365.3"/>
</dbReference>
<dbReference type="UCSC" id="uc001twx.4">
    <property type="organism name" value="human"/>
</dbReference>
<dbReference type="AGR" id="HGNC:18133"/>
<dbReference type="CTD" id="51347"/>
<dbReference type="DisGeNET" id="51347"/>
<dbReference type="GeneCards" id="TAOK3"/>
<dbReference type="HGNC" id="HGNC:18133">
    <property type="gene designation" value="TAOK3"/>
</dbReference>
<dbReference type="HPA" id="ENSG00000135090">
    <property type="expression patterns" value="Low tissue specificity"/>
</dbReference>
<dbReference type="MIM" id="616711">
    <property type="type" value="gene"/>
</dbReference>
<dbReference type="neXtProt" id="NX_Q9H2K8"/>
<dbReference type="OpenTargets" id="ENSG00000135090"/>
<dbReference type="PharmGKB" id="PA134975064"/>
<dbReference type="VEuPathDB" id="HostDB:ENSG00000135090"/>
<dbReference type="eggNOG" id="KOG0577">
    <property type="taxonomic scope" value="Eukaryota"/>
</dbReference>
<dbReference type="GeneTree" id="ENSGT00940000155735"/>
<dbReference type="HOGENOM" id="CLU_000288_2_2_1"/>
<dbReference type="InParanoid" id="Q9H2K8"/>
<dbReference type="OMA" id="KEKIKEX"/>
<dbReference type="OrthoDB" id="10016527at2759"/>
<dbReference type="PAN-GO" id="Q9H2K8">
    <property type="GO annotations" value="6 GO annotations based on evolutionary models"/>
</dbReference>
<dbReference type="PhylomeDB" id="Q9H2K8"/>
<dbReference type="TreeFam" id="TF351444"/>
<dbReference type="PathwayCommons" id="Q9H2K8"/>
<dbReference type="Reactome" id="R-HSA-9013149">
    <property type="pathway name" value="RAC1 GTPase cycle"/>
</dbReference>
<dbReference type="Reactome" id="R-HSA-9013404">
    <property type="pathway name" value="RAC2 GTPase cycle"/>
</dbReference>
<dbReference type="Reactome" id="R-HSA-9013423">
    <property type="pathway name" value="RAC3 GTPase cycle"/>
</dbReference>
<dbReference type="SignaLink" id="Q9H2K8"/>
<dbReference type="SIGNOR" id="Q9H2K8"/>
<dbReference type="BioGRID-ORCS" id="51347">
    <property type="hits" value="12 hits in 1191 CRISPR screens"/>
</dbReference>
<dbReference type="ChiTaRS" id="TAOK3">
    <property type="organism name" value="human"/>
</dbReference>
<dbReference type="GeneWiki" id="TAOK3"/>
<dbReference type="GenomeRNAi" id="51347"/>
<dbReference type="Pharos" id="Q9H2K8">
    <property type="development level" value="Tchem"/>
</dbReference>
<dbReference type="PRO" id="PR:Q9H2K8"/>
<dbReference type="Proteomes" id="UP000005640">
    <property type="component" value="Chromosome 12"/>
</dbReference>
<dbReference type="RNAct" id="Q9H2K8">
    <property type="molecule type" value="protein"/>
</dbReference>
<dbReference type="Bgee" id="ENSG00000135090">
    <property type="expression patterns" value="Expressed in secondary oocyte and 214 other cell types or tissues"/>
</dbReference>
<dbReference type="ExpressionAtlas" id="Q9H2K8">
    <property type="expression patterns" value="baseline and differential"/>
</dbReference>
<dbReference type="GO" id="GO:0005737">
    <property type="term" value="C:cytoplasm"/>
    <property type="evidence" value="ECO:0000318"/>
    <property type="project" value="GO_Central"/>
</dbReference>
<dbReference type="GO" id="GO:0005811">
    <property type="term" value="C:lipid droplet"/>
    <property type="evidence" value="ECO:0007669"/>
    <property type="project" value="Ensembl"/>
</dbReference>
<dbReference type="GO" id="GO:0005886">
    <property type="term" value="C:plasma membrane"/>
    <property type="evidence" value="ECO:0007669"/>
    <property type="project" value="UniProtKB-SubCell"/>
</dbReference>
<dbReference type="GO" id="GO:0005524">
    <property type="term" value="F:ATP binding"/>
    <property type="evidence" value="ECO:0007669"/>
    <property type="project" value="UniProtKB-KW"/>
</dbReference>
<dbReference type="GO" id="GO:0004860">
    <property type="term" value="F:protein kinase inhibitor activity"/>
    <property type="evidence" value="ECO:0000304"/>
    <property type="project" value="ProtInc"/>
</dbReference>
<dbReference type="GO" id="GO:0106310">
    <property type="term" value="F:protein serine kinase activity"/>
    <property type="evidence" value="ECO:0007669"/>
    <property type="project" value="RHEA"/>
</dbReference>
<dbReference type="GO" id="GO:0004674">
    <property type="term" value="F:protein serine/threonine kinase activity"/>
    <property type="evidence" value="ECO:0000314"/>
    <property type="project" value="HGNC-UCL"/>
</dbReference>
<dbReference type="GO" id="GO:0016740">
    <property type="term" value="F:transferase activity"/>
    <property type="evidence" value="ECO:0000314"/>
    <property type="project" value="HGNC-UCL"/>
</dbReference>
<dbReference type="GO" id="GO:0006974">
    <property type="term" value="P:DNA damage response"/>
    <property type="evidence" value="ECO:0000314"/>
    <property type="project" value="UniProtKB"/>
</dbReference>
<dbReference type="GO" id="GO:0006281">
    <property type="term" value="P:DNA repair"/>
    <property type="evidence" value="ECO:0007669"/>
    <property type="project" value="UniProtKB-KW"/>
</dbReference>
<dbReference type="GO" id="GO:0000165">
    <property type="term" value="P:MAPK cascade"/>
    <property type="evidence" value="ECO:0000315"/>
    <property type="project" value="HGNC-UCL"/>
</dbReference>
<dbReference type="GO" id="GO:0002315">
    <property type="term" value="P:marginal zone B cell differentiation"/>
    <property type="evidence" value="ECO:0007669"/>
    <property type="project" value="Ensembl"/>
</dbReference>
<dbReference type="GO" id="GO:0097029">
    <property type="term" value="P:mature conventional dendritic cell differentiation"/>
    <property type="evidence" value="ECO:0007669"/>
    <property type="project" value="Ensembl"/>
</dbReference>
<dbReference type="GO" id="GO:0007095">
    <property type="term" value="P:mitotic G2 DNA damage checkpoint signaling"/>
    <property type="evidence" value="ECO:0000315"/>
    <property type="project" value="UniProtKB"/>
</dbReference>
<dbReference type="GO" id="GO:0046329">
    <property type="term" value="P:negative regulation of JNK cascade"/>
    <property type="evidence" value="ECO:0000314"/>
    <property type="project" value="HGNC-UCL"/>
</dbReference>
<dbReference type="GO" id="GO:0045650">
    <property type="term" value="P:negative regulation of macrophage differentiation"/>
    <property type="evidence" value="ECO:0007669"/>
    <property type="project" value="Ensembl"/>
</dbReference>
<dbReference type="GO" id="GO:0048812">
    <property type="term" value="P:neuron projection morphogenesis"/>
    <property type="evidence" value="ECO:0000318"/>
    <property type="project" value="GO_Central"/>
</dbReference>
<dbReference type="GO" id="GO:0046330">
    <property type="term" value="P:positive regulation of JNK cascade"/>
    <property type="evidence" value="ECO:0000315"/>
    <property type="project" value="HGNC-UCL"/>
</dbReference>
<dbReference type="GO" id="GO:0043507">
    <property type="term" value="P:positive regulation of JUN kinase activity"/>
    <property type="evidence" value="ECO:0000315"/>
    <property type="project" value="UniProtKB"/>
</dbReference>
<dbReference type="GO" id="GO:0045669">
    <property type="term" value="P:positive regulation of osteoblast differentiation"/>
    <property type="evidence" value="ECO:0007669"/>
    <property type="project" value="Ensembl"/>
</dbReference>
<dbReference type="GO" id="GO:0032874">
    <property type="term" value="P:positive regulation of stress-activated MAPK cascade"/>
    <property type="evidence" value="ECO:0000315"/>
    <property type="project" value="UniProtKB"/>
</dbReference>
<dbReference type="GO" id="GO:0006468">
    <property type="term" value="P:protein phosphorylation"/>
    <property type="evidence" value="ECO:0000315"/>
    <property type="project" value="UniProtKB"/>
</dbReference>
<dbReference type="GO" id="GO:0043408">
    <property type="term" value="P:regulation of MAPK cascade"/>
    <property type="evidence" value="ECO:0000318"/>
    <property type="project" value="GO_Central"/>
</dbReference>
<dbReference type="CDD" id="cd06633">
    <property type="entry name" value="STKc_TAO3"/>
    <property type="match status" value="1"/>
</dbReference>
<dbReference type="FunFam" id="1.10.510.10:FF:000030">
    <property type="entry name" value="Serine/threonine-protein kinase TAO2, putative"/>
    <property type="match status" value="1"/>
</dbReference>
<dbReference type="FunFam" id="3.30.200.20:FF:000029">
    <property type="entry name" value="Serine/threonine-protein kinase TAO2, putative"/>
    <property type="match status" value="1"/>
</dbReference>
<dbReference type="Gene3D" id="3.30.200.20">
    <property type="entry name" value="Phosphorylase Kinase, domain 1"/>
    <property type="match status" value="1"/>
</dbReference>
<dbReference type="Gene3D" id="1.10.510.10">
    <property type="entry name" value="Transferase(Phosphotransferase) domain 1"/>
    <property type="match status" value="1"/>
</dbReference>
<dbReference type="InterPro" id="IPR011009">
    <property type="entry name" value="Kinase-like_dom_sf"/>
</dbReference>
<dbReference type="InterPro" id="IPR000719">
    <property type="entry name" value="Prot_kinase_dom"/>
</dbReference>
<dbReference type="InterPro" id="IPR017441">
    <property type="entry name" value="Protein_kinase_ATP_BS"/>
</dbReference>
<dbReference type="InterPro" id="IPR008271">
    <property type="entry name" value="Ser/Thr_kinase_AS"/>
</dbReference>
<dbReference type="InterPro" id="IPR051234">
    <property type="entry name" value="TAO_STE20_kinase"/>
</dbReference>
<dbReference type="PANTHER" id="PTHR47167">
    <property type="entry name" value="SERINE/THREONINE-PROTEIN KINASE TAO1-LIKE PROTEIN"/>
    <property type="match status" value="1"/>
</dbReference>
<dbReference type="PANTHER" id="PTHR47167:SF10">
    <property type="entry name" value="SERINE_THREONINE-PROTEIN KINASE TAO3"/>
    <property type="match status" value="1"/>
</dbReference>
<dbReference type="Pfam" id="PF00069">
    <property type="entry name" value="Pkinase"/>
    <property type="match status" value="1"/>
</dbReference>
<dbReference type="SMART" id="SM00220">
    <property type="entry name" value="S_TKc"/>
    <property type="match status" value="1"/>
</dbReference>
<dbReference type="SUPFAM" id="SSF56112">
    <property type="entry name" value="Protein kinase-like (PK-like)"/>
    <property type="match status" value="1"/>
</dbReference>
<dbReference type="PROSITE" id="PS00107">
    <property type="entry name" value="PROTEIN_KINASE_ATP"/>
    <property type="match status" value="1"/>
</dbReference>
<dbReference type="PROSITE" id="PS50011">
    <property type="entry name" value="PROTEIN_KINASE_DOM"/>
    <property type="match status" value="1"/>
</dbReference>
<dbReference type="PROSITE" id="PS00108">
    <property type="entry name" value="PROTEIN_KINASE_ST"/>
    <property type="match status" value="1"/>
</dbReference>
<gene>
    <name type="primary">TAOK3</name>
    <name type="synonym">DPK</name>
    <name type="synonym">JIK</name>
    <name type="synonym">KDS</name>
    <name type="synonym">MAP3K18</name>
</gene>
<accession>Q9H2K8</accession>
<accession>Q658N1</accession>
<accession>Q8IUM4</accession>
<accession>Q9HC79</accession>
<accession>Q9NZM9</accession>
<accession>Q9UHG7</accession>
<sequence>MRKGVLKDPEIADLFYKDDPEELFIGLHEIGHGSFGAVYFATNAHTSEVVAIKKMSYSGKQTHEKWQDILKEVKFLRQLKHPNTIEYKGCYLKEHTAWLVMEYCLGSASDLLEVHKKPLQEVEIAAITHGALHGLAYLHSHALIHRDIKAGNILLTEPGQVKLADFGSASMASPANSFVGTPYWMAPEVILAMDEGQYDGKVDIWSLGITCIELAERKPPLFNMNAMSALYHIAQNDSPTLQSNEWTDSFRRFVDYCLQKIPQERPTSAELLRHDFVRRDRPLRVLIDLIQRTKDAVRELDNLQYRKMKKILFQETRNGPLNESQEDEEDSEHGTSLNREMDSLGSNHSIPSMSVSTGSQSSSVNSMQEVMDESSSELVMMHDDESTINSSSSVVHKKDHVFIRDEAGHGDPRPEPRPTQSVQSQALHYRNRERFATIKSASLVTRQIHEHEQENELREQMSGYKRMRRQHQKQLIALENKLKAEMDEHRLKLQKEVETHANNSSIELEKLAKKQVAIIEKEAKVAAADEKKFQQQILAQQKKDLTTFLESQKKQYKICKEKIKEEMNEDHSTPKKEKQERISKHKENLQHTQAEEEAHLLTQQRLYYDKNCRFFKRKIMIKRHEVEQQNIREELNKKRTQKEMEHAMLIRHDESTRELEYRQLHTLQKLRMDLIRLQHQTELENQLEYNKRRERELHRKHVMELRQQPKNLKAMEMQIKKQFQDTCKVQTKQYKALKNHQLEVTPKNEHKTILKTLKDEQTRKLAILAEQYEQSINEMMASQALRLDEAQEAECQALRLQLQQEMELLNAYQSKIKMQTEAQHERELQKLEQRVSLRRAHLEQKIEEELAALQKERSERIKNLLERQEREIETFDMESLRMGFGNLVTLDFPKEDYR</sequence>
<reference key="1">
    <citation type="journal article" date="1999" name="J. Biol. Chem.">
        <title>Human JIK, a novel member of the STE20 kinase family that inhibits JNK and is negatively regulated by epidermal growth factor.</title>
        <authorList>
            <person name="Tassi E."/>
            <person name="Biesova Z."/>
            <person name="Di Fiore P.P."/>
            <person name="Gutkind J.S."/>
            <person name="Wong W.T."/>
        </authorList>
    </citation>
    <scope>NUCLEOTIDE SEQUENCE [MRNA]</scope>
    <scope>PHOSPHORYLATION</scope>
    <scope>MUTAGENESIS OF THR-181 AND TYR-183</scope>
    <scope>FUNCTION</scope>
</reference>
<reference key="2">
    <citation type="journal article" date="2000" name="Biochem. Biophys. Res. Commun.">
        <title>Cloning of DPK, a novel dendritic cell-derived protein kinase activating the ERK1/ERK2 and JNK/SAPK pathways.</title>
        <authorList>
            <person name="Zhang W."/>
            <person name="Chen T."/>
            <person name="Wan T."/>
            <person name="He L."/>
            <person name="Li N."/>
            <person name="Yuan Z."/>
            <person name="Cao X."/>
        </authorList>
    </citation>
    <scope>NUCLEOTIDE SEQUENCE [MRNA]</scope>
    <scope>FUNCTION</scope>
    <scope>TISSUE SPECIFICITY</scope>
    <source>
        <tissue>Dendritic cell</tissue>
    </source>
</reference>
<reference key="3">
    <citation type="journal article" date="2003" name="Oncogene">
        <title>Comparative studies of a new subfamily of human Ste20-like kinases: homodimerization, subcellular localization, and selective activation of MKK3 and p38.</title>
        <authorList>
            <person name="Yustein J.T."/>
            <person name="Xia L."/>
            <person name="Kahlenburg J.M."/>
            <person name="Robinson D."/>
            <person name="Templeton D."/>
            <person name="Kung H.-J."/>
        </authorList>
    </citation>
    <scope>NUCLEOTIDE SEQUENCE [MRNA]</scope>
    <scope>SELF-ASSOCIATION</scope>
    <scope>TISSUE SPECIFICITY</scope>
    <scope>VARIANT ASN-47</scope>
    <scope>SUBCELLULAR LOCATION</scope>
</reference>
<reference key="4">
    <citation type="submission" date="1999-08" db="EMBL/GenBank/DDBJ databases">
        <title>KDS and TAO1, two related proteins with kinase domain homology to STE20, differentially relocate in mitogen stimulated T lymphocytes.</title>
        <authorList>
            <person name="Carter T.G."/>
            <person name="Benton B."/>
            <person name="Fruhling D."/>
            <person name="Monks C.R.F."/>
            <person name="Windmiller D."/>
            <person name="Kupfer A."/>
            <person name="Manfredi J."/>
            <person name="Johnson G.L."/>
            <person name="Pleiman C.M."/>
        </authorList>
    </citation>
    <scope>NUCLEOTIDE SEQUENCE [MRNA]</scope>
    <scope>VARIANT ASN-47</scope>
</reference>
<reference key="5">
    <citation type="submission" date="2003-05" db="EMBL/GenBank/DDBJ databases">
        <title>Cloning of human full-length CDSs in BD Creator(TM) system donor vector.</title>
        <authorList>
            <person name="Kalnine N."/>
            <person name="Chen X."/>
            <person name="Rolfs A."/>
            <person name="Halleck A."/>
            <person name="Hines L."/>
            <person name="Eisenstein S."/>
            <person name="Koundinya M."/>
            <person name="Raphael J."/>
            <person name="Moreira D."/>
            <person name="Kelley T."/>
            <person name="LaBaer J."/>
            <person name="Lin Y."/>
            <person name="Phelan M."/>
            <person name="Farmer A."/>
        </authorList>
    </citation>
    <scope>NUCLEOTIDE SEQUENCE [LARGE SCALE MRNA]</scope>
</reference>
<reference key="6">
    <citation type="journal article" date="2006" name="Nature">
        <title>The finished DNA sequence of human chromosome 12.</title>
        <authorList>
            <person name="Scherer S.E."/>
            <person name="Muzny D.M."/>
            <person name="Buhay C.J."/>
            <person name="Chen R."/>
            <person name="Cree A."/>
            <person name="Ding Y."/>
            <person name="Dugan-Rocha S."/>
            <person name="Gill R."/>
            <person name="Gunaratne P."/>
            <person name="Harris R.A."/>
            <person name="Hawes A.C."/>
            <person name="Hernandez J."/>
            <person name="Hodgson A.V."/>
            <person name="Hume J."/>
            <person name="Jackson A."/>
            <person name="Khan Z.M."/>
            <person name="Kovar-Smith C."/>
            <person name="Lewis L.R."/>
            <person name="Lozado R.J."/>
            <person name="Metzker M.L."/>
            <person name="Milosavljevic A."/>
            <person name="Miner G.R."/>
            <person name="Montgomery K.T."/>
            <person name="Morgan M.B."/>
            <person name="Nazareth L.V."/>
            <person name="Scott G."/>
            <person name="Sodergren E."/>
            <person name="Song X.-Z."/>
            <person name="Steffen D."/>
            <person name="Lovering R.C."/>
            <person name="Wheeler D.A."/>
            <person name="Worley K.C."/>
            <person name="Yuan Y."/>
            <person name="Zhang Z."/>
            <person name="Adams C.Q."/>
            <person name="Ansari-Lari M.A."/>
            <person name="Ayele M."/>
            <person name="Brown M.J."/>
            <person name="Chen G."/>
            <person name="Chen Z."/>
            <person name="Clerc-Blankenburg K.P."/>
            <person name="Davis C."/>
            <person name="Delgado O."/>
            <person name="Dinh H.H."/>
            <person name="Draper H."/>
            <person name="Gonzalez-Garay M.L."/>
            <person name="Havlak P."/>
            <person name="Jackson L.R."/>
            <person name="Jacob L.S."/>
            <person name="Kelly S.H."/>
            <person name="Li L."/>
            <person name="Li Z."/>
            <person name="Liu J."/>
            <person name="Liu W."/>
            <person name="Lu J."/>
            <person name="Maheshwari M."/>
            <person name="Nguyen B.-V."/>
            <person name="Okwuonu G.O."/>
            <person name="Pasternak S."/>
            <person name="Perez L.M."/>
            <person name="Plopper F.J.H."/>
            <person name="Santibanez J."/>
            <person name="Shen H."/>
            <person name="Tabor P.E."/>
            <person name="Verduzco D."/>
            <person name="Waldron L."/>
            <person name="Wang Q."/>
            <person name="Williams G.A."/>
            <person name="Zhang J."/>
            <person name="Zhou J."/>
            <person name="Allen C.C."/>
            <person name="Amin A.G."/>
            <person name="Anyalebechi V."/>
            <person name="Bailey M."/>
            <person name="Barbaria J.A."/>
            <person name="Bimage K.E."/>
            <person name="Bryant N.P."/>
            <person name="Burch P.E."/>
            <person name="Burkett C.E."/>
            <person name="Burrell K.L."/>
            <person name="Calderon E."/>
            <person name="Cardenas V."/>
            <person name="Carter K."/>
            <person name="Casias K."/>
            <person name="Cavazos I."/>
            <person name="Cavazos S.R."/>
            <person name="Ceasar H."/>
            <person name="Chacko J."/>
            <person name="Chan S.N."/>
            <person name="Chavez D."/>
            <person name="Christopoulos C."/>
            <person name="Chu J."/>
            <person name="Cockrell R."/>
            <person name="Cox C.D."/>
            <person name="Dang M."/>
            <person name="Dathorne S.R."/>
            <person name="David R."/>
            <person name="Davis C.M."/>
            <person name="Davy-Carroll L."/>
            <person name="Deshazo D.R."/>
            <person name="Donlin J.E."/>
            <person name="D'Souza L."/>
            <person name="Eaves K.A."/>
            <person name="Egan A."/>
            <person name="Emery-Cohen A.J."/>
            <person name="Escotto M."/>
            <person name="Flagg N."/>
            <person name="Forbes L.D."/>
            <person name="Gabisi A.M."/>
            <person name="Garza M."/>
            <person name="Hamilton C."/>
            <person name="Henderson N."/>
            <person name="Hernandez O."/>
            <person name="Hines S."/>
            <person name="Hogues M.E."/>
            <person name="Huang M."/>
            <person name="Idlebird D.G."/>
            <person name="Johnson R."/>
            <person name="Jolivet A."/>
            <person name="Jones S."/>
            <person name="Kagan R."/>
            <person name="King L.M."/>
            <person name="Leal B."/>
            <person name="Lebow H."/>
            <person name="Lee S."/>
            <person name="LeVan J.M."/>
            <person name="Lewis L.C."/>
            <person name="London P."/>
            <person name="Lorensuhewa L.M."/>
            <person name="Loulseged H."/>
            <person name="Lovett D.A."/>
            <person name="Lucier A."/>
            <person name="Lucier R.L."/>
            <person name="Ma J."/>
            <person name="Madu R.C."/>
            <person name="Mapua P."/>
            <person name="Martindale A.D."/>
            <person name="Martinez E."/>
            <person name="Massey E."/>
            <person name="Mawhiney S."/>
            <person name="Meador M.G."/>
            <person name="Mendez S."/>
            <person name="Mercado C."/>
            <person name="Mercado I.C."/>
            <person name="Merritt C.E."/>
            <person name="Miner Z.L."/>
            <person name="Minja E."/>
            <person name="Mitchell T."/>
            <person name="Mohabbat F."/>
            <person name="Mohabbat K."/>
            <person name="Montgomery B."/>
            <person name="Moore N."/>
            <person name="Morris S."/>
            <person name="Munidasa M."/>
            <person name="Ngo R.N."/>
            <person name="Nguyen N.B."/>
            <person name="Nickerson E."/>
            <person name="Nwaokelemeh O.O."/>
            <person name="Nwokenkwo S."/>
            <person name="Obregon M."/>
            <person name="Oguh M."/>
            <person name="Oragunye N."/>
            <person name="Oviedo R.J."/>
            <person name="Parish B.J."/>
            <person name="Parker D.N."/>
            <person name="Parrish J."/>
            <person name="Parks K.L."/>
            <person name="Paul H.A."/>
            <person name="Payton B.A."/>
            <person name="Perez A."/>
            <person name="Perrin W."/>
            <person name="Pickens A."/>
            <person name="Primus E.L."/>
            <person name="Pu L.-L."/>
            <person name="Puazo M."/>
            <person name="Quiles M.M."/>
            <person name="Quiroz J.B."/>
            <person name="Rabata D."/>
            <person name="Reeves K."/>
            <person name="Ruiz S.J."/>
            <person name="Shao H."/>
            <person name="Sisson I."/>
            <person name="Sonaike T."/>
            <person name="Sorelle R.P."/>
            <person name="Sutton A.E."/>
            <person name="Svatek A.F."/>
            <person name="Svetz L.A."/>
            <person name="Tamerisa K.S."/>
            <person name="Taylor T.R."/>
            <person name="Teague B."/>
            <person name="Thomas N."/>
            <person name="Thorn R.D."/>
            <person name="Trejos Z.Y."/>
            <person name="Trevino B.K."/>
            <person name="Ukegbu O.N."/>
            <person name="Urban J.B."/>
            <person name="Vasquez L.I."/>
            <person name="Vera V.A."/>
            <person name="Villasana D.M."/>
            <person name="Wang L."/>
            <person name="Ward-Moore S."/>
            <person name="Warren J.T."/>
            <person name="Wei X."/>
            <person name="White F."/>
            <person name="Williamson A.L."/>
            <person name="Wleczyk R."/>
            <person name="Wooden H.S."/>
            <person name="Wooden S.H."/>
            <person name="Yen J."/>
            <person name="Yoon L."/>
            <person name="Yoon V."/>
            <person name="Zorrilla S.E."/>
            <person name="Nelson D."/>
            <person name="Kucherlapati R."/>
            <person name="Weinstock G."/>
            <person name="Gibbs R.A."/>
        </authorList>
    </citation>
    <scope>NUCLEOTIDE SEQUENCE [LARGE SCALE GENOMIC DNA]</scope>
</reference>
<reference key="7">
    <citation type="journal article" date="2004" name="Genome Res.">
        <title>The status, quality, and expansion of the NIH full-length cDNA project: the Mammalian Gene Collection (MGC).</title>
        <authorList>
            <consortium name="The MGC Project Team"/>
        </authorList>
    </citation>
    <scope>NUCLEOTIDE SEQUENCE [LARGE SCALE MRNA]</scope>
    <source>
        <tissue>Placenta</tissue>
    </source>
</reference>
<reference key="8">
    <citation type="journal article" date="2007" name="BMC Genomics">
        <title>The full-ORF clone resource of the German cDNA consortium.</title>
        <authorList>
            <person name="Bechtel S."/>
            <person name="Rosenfelder H."/>
            <person name="Duda A."/>
            <person name="Schmidt C.P."/>
            <person name="Ernst U."/>
            <person name="Wellenreuther R."/>
            <person name="Mehrle A."/>
            <person name="Schuster C."/>
            <person name="Bahr A."/>
            <person name="Bloecker H."/>
            <person name="Heubner D."/>
            <person name="Hoerlein A."/>
            <person name="Michel G."/>
            <person name="Wedler H."/>
            <person name="Koehrer K."/>
            <person name="Ottenwaelder B."/>
            <person name="Poustka A."/>
            <person name="Wiemann S."/>
            <person name="Schupp I."/>
        </authorList>
    </citation>
    <scope>NUCLEOTIDE SEQUENCE [LARGE SCALE MRNA] OF 191-898</scope>
    <source>
        <tissue>Stomach</tissue>
    </source>
</reference>
<reference key="9">
    <citation type="journal article" date="2004" name="Br. J. Dermatol.">
        <title>SEREX identification of new tumour-associated antigens in cutaneous T-cell lymphoma.</title>
        <authorList>
            <person name="Hartmann T.B."/>
            <person name="Thiel D."/>
            <person name="Dummer R."/>
            <person name="Schadendorf D."/>
            <person name="Eichmueller S."/>
        </authorList>
    </citation>
    <scope>NUCLEOTIDE SEQUENCE [MRNA] OF 304-898</scope>
    <source>
        <tissue>T-cell lymphoma</tissue>
    </source>
</reference>
<reference key="10">
    <citation type="journal article" date="2001" name="J. Biol. Chem.">
        <title>Activation of caspase-12, an endoplastic reticulum (ER) resident caspase, through tumor necrosis factor receptor-associated factor 2-dependent mechanism in response to the ER stress.</title>
        <authorList>
            <person name="Yoneda T."/>
            <person name="Imaizumi K."/>
            <person name="Oono K."/>
            <person name="Yui D."/>
            <person name="Gomi F."/>
            <person name="Katayama T."/>
            <person name="Tohyama M."/>
        </authorList>
    </citation>
    <scope>INTERACTION WITH ERN1 AND TRAF2</scope>
</reference>
<reference key="11">
    <citation type="journal article" date="2007" name="EMBO J.">
        <title>TAO kinases mediate activation of p38 in response to DNA damage.</title>
        <authorList>
            <person name="Raman M."/>
            <person name="Earnest S."/>
            <person name="Zhang K."/>
            <person name="Zhao Y."/>
            <person name="Cobb M.H."/>
        </authorList>
    </citation>
    <scope>FUNCTION</scope>
    <scope>PHOSPHORYLATION AT SER-324</scope>
    <scope>INDUCTION</scope>
    <scope>MUTAGENESIS OF ASP-165 AND SER-324</scope>
</reference>
<reference key="12">
    <citation type="journal article" date="2008" name="Mol. Cell">
        <title>Kinase-selective enrichment enables quantitative phosphoproteomics of the kinome across the cell cycle.</title>
        <authorList>
            <person name="Daub H."/>
            <person name="Olsen J.V."/>
            <person name="Bairlein M."/>
            <person name="Gnad F."/>
            <person name="Oppermann F.S."/>
            <person name="Korner R."/>
            <person name="Greff Z."/>
            <person name="Keri G."/>
            <person name="Stemmann O."/>
            <person name="Mann M."/>
        </authorList>
    </citation>
    <scope>PHOSPHORYLATION [LARGE SCALE ANALYSIS] AT SER-324</scope>
    <scope>IDENTIFICATION BY MASS SPECTROMETRY [LARGE SCALE ANALYSIS]</scope>
    <source>
        <tissue>Cervix carcinoma</tissue>
    </source>
</reference>
<reference key="13">
    <citation type="journal article" date="2008" name="Proc. Natl. Acad. Sci. U.S.A.">
        <title>A quantitative atlas of mitotic phosphorylation.</title>
        <authorList>
            <person name="Dephoure N."/>
            <person name="Zhou C."/>
            <person name="Villen J."/>
            <person name="Beausoleil S.A."/>
            <person name="Bakalarski C.E."/>
            <person name="Elledge S.J."/>
            <person name="Gygi S.P."/>
        </authorList>
    </citation>
    <scope>PHOSPHORYLATION [LARGE SCALE ANALYSIS] AT SER-324 AND SER-442</scope>
    <scope>IDENTIFICATION BY MASS SPECTROMETRY [LARGE SCALE ANALYSIS]</scope>
    <source>
        <tissue>Cervix carcinoma</tissue>
    </source>
</reference>
<reference key="14">
    <citation type="journal article" date="2009" name="Mol. Cell. Proteomics">
        <title>Large-scale proteomics analysis of the human kinome.</title>
        <authorList>
            <person name="Oppermann F.S."/>
            <person name="Gnad F."/>
            <person name="Olsen J.V."/>
            <person name="Hornberger R."/>
            <person name="Greff Z."/>
            <person name="Keri G."/>
            <person name="Mann M."/>
            <person name="Daub H."/>
        </authorList>
    </citation>
    <scope>PHOSPHORYLATION [LARGE SCALE ANALYSIS] AT SER-324 AND SER-331</scope>
    <scope>IDENTIFICATION BY MASS SPECTROMETRY [LARGE SCALE ANALYSIS]</scope>
</reference>
<reference key="15">
    <citation type="journal article" date="2010" name="PLoS ONE">
        <title>Signal transduction protein array analysis links LRRK2 to Ste20 kinases and PKC zeta that modulate neuronal plasticity.</title>
        <authorList>
            <person name="Zach S."/>
            <person name="Felk S."/>
            <person name="Gillardon F."/>
        </authorList>
    </citation>
    <scope>PHOSPHORYLATION BY LRRK2</scope>
</reference>
<reference key="16">
    <citation type="journal article" date="2010" name="Sci. Signal.">
        <title>Quantitative phosphoproteomics reveals widespread full phosphorylation site occupancy during mitosis.</title>
        <authorList>
            <person name="Olsen J.V."/>
            <person name="Vermeulen M."/>
            <person name="Santamaria A."/>
            <person name="Kumar C."/>
            <person name="Miller M.L."/>
            <person name="Jensen L.J."/>
            <person name="Gnad F."/>
            <person name="Cox J."/>
            <person name="Jensen T.S."/>
            <person name="Nigg E.A."/>
            <person name="Brunak S."/>
            <person name="Mann M."/>
        </authorList>
    </citation>
    <scope>PHOSPHORYLATION [LARGE SCALE ANALYSIS] AT SER-324</scope>
    <scope>IDENTIFICATION BY MASS SPECTROMETRY [LARGE SCALE ANALYSIS]</scope>
    <source>
        <tissue>Cervix carcinoma</tissue>
    </source>
</reference>
<reference key="17">
    <citation type="journal article" date="2011" name="BMC Syst. Biol.">
        <title>Initial characterization of the human central proteome.</title>
        <authorList>
            <person name="Burkard T.R."/>
            <person name="Planyavsky M."/>
            <person name="Kaupe I."/>
            <person name="Breitwieser F.P."/>
            <person name="Buerckstuemmer T."/>
            <person name="Bennett K.L."/>
            <person name="Superti-Furga G."/>
            <person name="Colinge J."/>
        </authorList>
    </citation>
    <scope>IDENTIFICATION BY MASS SPECTROMETRY [LARGE SCALE ANALYSIS]</scope>
</reference>
<reference key="18">
    <citation type="journal article" date="2011" name="Sci. Signal.">
        <title>System-wide temporal characterization of the proteome and phosphoproteome of human embryonic stem cell differentiation.</title>
        <authorList>
            <person name="Rigbolt K.T."/>
            <person name="Prokhorova T.A."/>
            <person name="Akimov V."/>
            <person name="Henningsen J."/>
            <person name="Johansen P.T."/>
            <person name="Kratchmarova I."/>
            <person name="Kassem M."/>
            <person name="Mann M."/>
            <person name="Olsen J.V."/>
            <person name="Blagoev B."/>
        </authorList>
    </citation>
    <scope>PHOSPHORYLATION [LARGE SCALE ANALYSIS] AT SER-324</scope>
    <scope>IDENTIFICATION BY MASS SPECTROMETRY [LARGE SCALE ANALYSIS]</scope>
</reference>
<reference key="19">
    <citation type="journal article" date="2012" name="Biochem. Biophys. Res. Commun.">
        <title>Identification of host cell proteins which interact with herpes simplex virus type 1 tegument protein pUL37.</title>
        <authorList>
            <person name="Kelly B.J."/>
            <person name="Diefenbach E."/>
            <person name="Fraefel C."/>
            <person name="Diefenbach R.J."/>
        </authorList>
    </citation>
    <scope>INTERACTION WITH HERPEX SIMPLEX VIRUS 1 PROTEIN UL37</scope>
</reference>
<reference key="20">
    <citation type="journal article" date="2013" name="J. Proteome Res.">
        <title>Toward a comprehensive characterization of a human cancer cell phosphoproteome.</title>
        <authorList>
            <person name="Zhou H."/>
            <person name="Di Palma S."/>
            <person name="Preisinger C."/>
            <person name="Peng M."/>
            <person name="Polat A.N."/>
            <person name="Heck A.J."/>
            <person name="Mohammed S."/>
        </authorList>
    </citation>
    <scope>PHOSPHORYLATION [LARGE SCALE ANALYSIS] AT SER-324 AND SER-331</scope>
    <scope>IDENTIFICATION BY MASS SPECTROMETRY [LARGE SCALE ANALYSIS]</scope>
    <source>
        <tissue>Cervix carcinoma</tissue>
        <tissue>Erythroleukemia</tissue>
    </source>
</reference>
<reference key="21">
    <citation type="journal article" date="2014" name="J. Proteomics">
        <title>An enzyme assisted RP-RPLC approach for in-depth analysis of human liver phosphoproteome.</title>
        <authorList>
            <person name="Bian Y."/>
            <person name="Song C."/>
            <person name="Cheng K."/>
            <person name="Dong M."/>
            <person name="Wang F."/>
            <person name="Huang J."/>
            <person name="Sun D."/>
            <person name="Wang L."/>
            <person name="Ye M."/>
            <person name="Zou H."/>
        </authorList>
    </citation>
    <scope>IDENTIFICATION BY MASS SPECTROMETRY [LARGE SCALE ANALYSIS]</scope>
    <source>
        <tissue>Liver</tissue>
    </source>
</reference>
<reference key="22">
    <citation type="journal article" date="2018" name="J. Immunol.">
        <title>TAOK3 Regulates Canonical TCR Signaling by Preventing Early SHP-1-Mediated Inactivation of LCK.</title>
        <authorList>
            <person name="Ormonde J.V.S."/>
            <person name="Li Z."/>
            <person name="Stegen C."/>
            <person name="Madrenas J."/>
        </authorList>
    </citation>
    <scope>FUNCTION</scope>
    <scope>SUBCELLULAR LOCATION</scope>
    <scope>PHOSPHORYLATION AT SER-324</scope>
    <scope>PHOSPHORYLATION AT TYROSINE RESIDUES</scope>
</reference>
<reference key="23">
    <citation type="journal article" date="2020" name="Biochem. Biophys. Res. Commun.">
        <title>TAOK3 is a MAP3K contributing to osteoblast differentiation and skeletal mineralization.</title>
        <authorList>
            <person name="Li Z."/>
            <person name="Oh H."/>
            <person name="Cung M."/>
            <person name="Marquez S.J."/>
            <person name="Sun J."/>
            <person name="Hammad H."/>
            <person name="Janssens S."/>
            <person name="Pouliot P."/>
            <person name="Lambrecht B.N."/>
            <person name="Yang Y.S."/>
            <person name="Shim J.H."/>
            <person name="Greenblatt M.B."/>
        </authorList>
    </citation>
    <scope>FUNCTION</scope>
</reference>
<reference key="24">
    <citation type="journal article" date="2021" name="Mol. Metab.">
        <title>STE20-type kinase TAOK3 regulates hepatic lipid partitioning.</title>
        <authorList>
            <person name="Xia Y."/>
            <person name="Caputo M."/>
            <person name="Cansby E."/>
            <person name="Anand S.K."/>
            <person name="Suett S."/>
            <person name="Henricsson M."/>
            <person name="Porosk R."/>
            <person name="Marschall H.U."/>
            <person name="Blueher M."/>
            <person name="Mahlapuu M."/>
        </authorList>
    </citation>
    <scope>FUNCTION</scope>
    <scope>INTERACTION WITH STK25</scope>
    <scope>SUBCELLULAR LOCATION</scope>
</reference>
<reference key="25">
    <citation type="journal article" date="2024" name="Sci. Signal.">
        <title>The induction of SHP-1 degradation by TAOK3 ensures the responsiveness of T cells to TCR stimulation.</title>
        <authorList>
            <person name="Poirier A."/>
            <person name="Ormonde J.V.S."/>
            <person name="Aubry I."/>
            <person name="Abidin B.M."/>
            <person name="Feng C.H."/>
            <person name="Martinez-Cordova Z."/>
            <person name="Hincapie A.M."/>
            <person name="Wu C."/>
            <person name="Perez-Quintero L.A."/>
            <person name="Wang C.L."/>
            <person name="Gingras A.C."/>
            <person name="Madrenas J."/>
            <person name="Tremblay M.L."/>
        </authorList>
    </citation>
    <scope>FUNCTION</scope>
    <scope>MUTAGENESIS OF THR-181; TYR-183; TYR-256; TYR-305 AND SER-324</scope>
</reference>
<reference key="26">
    <citation type="journal article" date="2007" name="Nature">
        <title>Patterns of somatic mutation in human cancer genomes.</title>
        <authorList>
            <person name="Greenman C."/>
            <person name="Stephens P."/>
            <person name="Smith R."/>
            <person name="Dalgliesh G.L."/>
            <person name="Hunter C."/>
            <person name="Bignell G."/>
            <person name="Davies H."/>
            <person name="Teague J."/>
            <person name="Butler A."/>
            <person name="Stevens C."/>
            <person name="Edkins S."/>
            <person name="O'Meara S."/>
            <person name="Vastrik I."/>
            <person name="Schmidt E.E."/>
            <person name="Avis T."/>
            <person name="Barthorpe S."/>
            <person name="Bhamra G."/>
            <person name="Buck G."/>
            <person name="Choudhury B."/>
            <person name="Clements J."/>
            <person name="Cole J."/>
            <person name="Dicks E."/>
            <person name="Forbes S."/>
            <person name="Gray K."/>
            <person name="Halliday K."/>
            <person name="Harrison R."/>
            <person name="Hills K."/>
            <person name="Hinton J."/>
            <person name="Jenkinson A."/>
            <person name="Jones D."/>
            <person name="Menzies A."/>
            <person name="Mironenko T."/>
            <person name="Perry J."/>
            <person name="Raine K."/>
            <person name="Richardson D."/>
            <person name="Shepherd R."/>
            <person name="Small A."/>
            <person name="Tofts C."/>
            <person name="Varian J."/>
            <person name="Webb T."/>
            <person name="West S."/>
            <person name="Widaa S."/>
            <person name="Yates A."/>
            <person name="Cahill D.P."/>
            <person name="Louis D.N."/>
            <person name="Goldstraw P."/>
            <person name="Nicholson A.G."/>
            <person name="Brasseur F."/>
            <person name="Looijenga L."/>
            <person name="Weber B.L."/>
            <person name="Chiew Y.-E."/>
            <person name="DeFazio A."/>
            <person name="Greaves M.F."/>
            <person name="Green A.R."/>
            <person name="Campbell P."/>
            <person name="Birney E."/>
            <person name="Easton D.F."/>
            <person name="Chenevix-Trench G."/>
            <person name="Tan M.-H."/>
            <person name="Khoo S.K."/>
            <person name="Teh B.T."/>
            <person name="Yuen S.T."/>
            <person name="Leung S.Y."/>
            <person name="Wooster R."/>
            <person name="Futreal P.A."/>
            <person name="Stratton M.R."/>
        </authorList>
    </citation>
    <scope>VARIANTS [LARGE SCALE ANALYSIS] THR-20; ASN-47; TYR-392 AND TYR-727</scope>
</reference>
<protein>
    <recommendedName>
        <fullName>Serine/threonine-protein kinase TAO3</fullName>
        <ecNumber>2.7.11.1</ecNumber>
    </recommendedName>
    <alternativeName>
        <fullName>Cutaneous T-cell lymphoma-associated antigen HD-CL-09</fullName>
        <shortName>CTCL-associated antigen HD-CL-09</shortName>
    </alternativeName>
    <alternativeName>
        <fullName>Dendritic cell-derived protein kinase</fullName>
    </alternativeName>
    <alternativeName>
        <fullName>JNK/SAPK-inhibitory kinase</fullName>
    </alternativeName>
    <alternativeName>
        <fullName>Jun kinase-inhibitory kinase</fullName>
    </alternativeName>
    <alternativeName>
        <fullName>Kinase from chicken homolog A</fullName>
        <shortName>hKFC-A</shortName>
    </alternativeName>
    <alternativeName>
        <fullName>Thousand and one amino acid protein 3</fullName>
    </alternativeName>
</protein>
<comment type="function">
    <text evidence="2 7 8 12 15 16 17 18">Serine/threonine-protein kinase that acts as a regulator of the p38/MAPK14 stress-activated MAPK cascade and of the MAPK8/JNK cascade. In response to DNA damage, involved in the G2/M transition DNA damage checkpoint by activating the p38/MAPK14 stress-activated MAPK cascade, probably by mediating phosphorylation of upstream MAP2K3 and MAP2K6 kinases. Inhibits basal activity of the MAPK8/JNK cascade and diminishes its activation in response to epidermal growth factor (EGF). Positively regulates canonical T cell receptor (TCR) signaling by preventing early PTPN6/SHP1-mediated inactivation of LCK, ensuring sustained TCR signaling that is required for optimal activation and differentiation of T cells (PubMed:30373850). Phosphorylates PTPN6/SHP1 on 'Thr-394', leading to its polyubiquitination and subsequent proteasomal degradation (PubMed:38166031). Required for cell surface expression of metalloprotease ADAM10 on type 1 transitional B cells which is necessary for their NOTCH-mediated development into marginal zone B cells (By similarity). Also required for the NOTCH-mediated terminal differentiation of splenic conventional type 2 dendritic cells (By similarity). Positively regulates osteoblast differentiation by acting as an upstream activator of the JNK pathway (PubMed:32807497). Promotes JNK signaling in hepatocytes and positively regulates hepatocyte lipid storage by inhibiting beta-oxidation and triacylglycerol secretion while enhancing lipid synthesis (PubMed:34634521). Restricts age-associated inflammation by negatively regulating differentiation of macrophages and their production of pro-inflammatory cytokines (By similarity). Plays a role in negatively regulating the abundance of regulatory T cells in white adipose tissue (By similarity).</text>
</comment>
<comment type="catalytic activity">
    <reaction>
        <text>L-seryl-[protein] + ATP = O-phospho-L-seryl-[protein] + ADP + H(+)</text>
        <dbReference type="Rhea" id="RHEA:17989"/>
        <dbReference type="Rhea" id="RHEA-COMP:9863"/>
        <dbReference type="Rhea" id="RHEA-COMP:11604"/>
        <dbReference type="ChEBI" id="CHEBI:15378"/>
        <dbReference type="ChEBI" id="CHEBI:29999"/>
        <dbReference type="ChEBI" id="CHEBI:30616"/>
        <dbReference type="ChEBI" id="CHEBI:83421"/>
        <dbReference type="ChEBI" id="CHEBI:456216"/>
        <dbReference type="EC" id="2.7.11.1"/>
    </reaction>
</comment>
<comment type="catalytic activity">
    <reaction>
        <text>L-threonyl-[protein] + ATP = O-phospho-L-threonyl-[protein] + ADP + H(+)</text>
        <dbReference type="Rhea" id="RHEA:46608"/>
        <dbReference type="Rhea" id="RHEA-COMP:11060"/>
        <dbReference type="Rhea" id="RHEA-COMP:11605"/>
        <dbReference type="ChEBI" id="CHEBI:15378"/>
        <dbReference type="ChEBI" id="CHEBI:30013"/>
        <dbReference type="ChEBI" id="CHEBI:30616"/>
        <dbReference type="ChEBI" id="CHEBI:61977"/>
        <dbReference type="ChEBI" id="CHEBI:456216"/>
        <dbReference type="EC" id="2.7.11.1"/>
    </reaction>
</comment>
<comment type="subunit">
    <text evidence="9 10 17">Self-associates (PubMed:13679851). Interacts with ERN1 and TRAF2 (PubMed:11278723). Interaction with TRAF2 is facilitated under ER stress conditions, such as treatment with tunicamycin, and may promote TRAF2 phosphorylation (PubMed:11278723). Interacts (via N-terminus) with STK25; the interaction promotes STK25 abundance at the level of protein expression and/or stability (PubMed:34634521).</text>
</comment>
<comment type="subunit">
    <text evidence="14">(Microbial infection) Interacts with herpes simplex virus 1 UL37 protein.</text>
</comment>
<comment type="interaction">
    <interactant intactId="EBI-1384100">
        <id>Q9H2K8</id>
    </interactant>
    <interactant intactId="EBI-371750">
        <id>O75460</id>
        <label>ERN1</label>
    </interactant>
    <organismsDiffer>false</organismsDiffer>
    <experiments>3</experiments>
</comment>
<comment type="interaction">
    <interactant intactId="EBI-1384100">
        <id>Q9H2K8</id>
    </interactant>
    <interactant intactId="EBI-466029">
        <id>P42858</id>
        <label>HTT</label>
    </interactant>
    <organismsDiffer>false</organismsDiffer>
    <experiments>3</experiments>
</comment>
<comment type="interaction">
    <interactant intactId="EBI-1384100">
        <id>Q9H2K8</id>
    </interactant>
    <interactant intactId="EBI-355744">
        <id>Q12933</id>
        <label>TRAF2</label>
    </interactant>
    <organismsDiffer>false</organismsDiffer>
    <experiments>2</experiments>
</comment>
<comment type="subcellular location">
    <subcellularLocation>
        <location evidence="10">Cytoplasm</location>
    </subcellularLocation>
    <subcellularLocation>
        <location evidence="10">Cell membrane</location>
        <topology evidence="10">Peripheral membrane protein</topology>
    </subcellularLocation>
    <subcellularLocation>
        <location evidence="15">Membrane raft</location>
    </subcellularLocation>
    <subcellularLocation>
        <location evidence="17">Lipid droplet</location>
    </subcellularLocation>
    <text evidence="15 17">Located primarily outside cell membrane rafts and remains outside upon canonical TCR ligation (PubMed:30373850). A small pool is detectable in cell membrane rafts in resting conditions but relocates outside the rafts upon TCR signaling (PubMed:30373850). Localizes to lipid droplets in hepatocytes (PubMed:34634521).</text>
</comment>
<comment type="tissue specificity">
    <text evidence="8 10">Ubiquitously expressed at a low level, and highly expressed in peripheral blood leukocytes (PBLs), thymus, spleen, kidney, skeletal muscle, heart and liver.</text>
</comment>
<comment type="PTM">
    <text evidence="7 12 13 15">Autophosphorylated (PubMed:10559204). Phosphorylation at Ser-324 by ATM following DNA damage is required for activation of the p38/MAPK14 stress-activated MAPK cascade (PubMed:17396146). Phosphorylated at Ser-324 and on Tyr residues during T cell activation (PubMed:30373850). Phosphorylated by LRRK2 (PubMed:20949042).</text>
</comment>
<comment type="similarity">
    <text evidence="20">Belongs to the protein kinase superfamily. STE Ser/Thr protein kinase family. STE20 subfamily.</text>
</comment>
<comment type="sequence caution" evidence="20">
    <conflict type="erroneous initiation">
        <sequence resource="EMBL-CDS" id="AAN09723"/>
    </conflict>
    <text>Truncated N-terminus.</text>
</comment>
<evidence type="ECO:0000250" key="1">
    <source>
        <dbReference type="UniProtKB" id="Q53UA7"/>
    </source>
</evidence>
<evidence type="ECO:0000250" key="2">
    <source>
        <dbReference type="UniProtKB" id="Q8BYC6"/>
    </source>
</evidence>
<evidence type="ECO:0000255" key="3"/>
<evidence type="ECO:0000255" key="4">
    <source>
        <dbReference type="PROSITE-ProRule" id="PRU00159"/>
    </source>
</evidence>
<evidence type="ECO:0000255" key="5">
    <source>
        <dbReference type="PROSITE-ProRule" id="PRU10027"/>
    </source>
</evidence>
<evidence type="ECO:0000256" key="6">
    <source>
        <dbReference type="SAM" id="MobiDB-lite"/>
    </source>
</evidence>
<evidence type="ECO:0000269" key="7">
    <source>
    </source>
</evidence>
<evidence type="ECO:0000269" key="8">
    <source>
    </source>
</evidence>
<evidence type="ECO:0000269" key="9">
    <source>
    </source>
</evidence>
<evidence type="ECO:0000269" key="10">
    <source>
    </source>
</evidence>
<evidence type="ECO:0000269" key="11">
    <source>
    </source>
</evidence>
<evidence type="ECO:0000269" key="12">
    <source>
    </source>
</evidence>
<evidence type="ECO:0000269" key="13">
    <source>
    </source>
</evidence>
<evidence type="ECO:0000269" key="14">
    <source>
    </source>
</evidence>
<evidence type="ECO:0000269" key="15">
    <source>
    </source>
</evidence>
<evidence type="ECO:0000269" key="16">
    <source>
    </source>
</evidence>
<evidence type="ECO:0000269" key="17">
    <source>
    </source>
</evidence>
<evidence type="ECO:0000269" key="18">
    <source>
    </source>
</evidence>
<evidence type="ECO:0000269" key="19">
    <source ref="4"/>
</evidence>
<evidence type="ECO:0000305" key="20"/>
<evidence type="ECO:0007744" key="21">
    <source>
    </source>
</evidence>
<evidence type="ECO:0007744" key="22">
    <source>
    </source>
</evidence>
<evidence type="ECO:0007744" key="23">
    <source>
    </source>
</evidence>
<evidence type="ECO:0007744" key="24">
    <source>
    </source>
</evidence>
<evidence type="ECO:0007744" key="25">
    <source>
    </source>
</evidence>
<evidence type="ECO:0007744" key="26">
    <source>
    </source>
</evidence>
<evidence type="ECO:0007829" key="27">
    <source>
        <dbReference type="PDB" id="6BDN"/>
    </source>
</evidence>
<organism>
    <name type="scientific">Homo sapiens</name>
    <name type="common">Human</name>
    <dbReference type="NCBI Taxonomy" id="9606"/>
    <lineage>
        <taxon>Eukaryota</taxon>
        <taxon>Metazoa</taxon>
        <taxon>Chordata</taxon>
        <taxon>Craniata</taxon>
        <taxon>Vertebrata</taxon>
        <taxon>Euteleostomi</taxon>
        <taxon>Mammalia</taxon>
        <taxon>Eutheria</taxon>
        <taxon>Euarchontoglires</taxon>
        <taxon>Primates</taxon>
        <taxon>Haplorrhini</taxon>
        <taxon>Catarrhini</taxon>
        <taxon>Hominidae</taxon>
        <taxon>Homo</taxon>
    </lineage>
</organism>